<feature type="chain" id="PRO_0000188589" description="Glycogen synthase">
    <location>
        <begin position="1"/>
        <end position="463"/>
    </location>
</feature>
<feature type="binding site" evidence="1">
    <location>
        <position position="15"/>
    </location>
    <ligand>
        <name>ADP-alpha-D-glucose</name>
        <dbReference type="ChEBI" id="CHEBI:57498"/>
    </ligand>
</feature>
<evidence type="ECO:0000255" key="1">
    <source>
        <dbReference type="HAMAP-Rule" id="MF_00484"/>
    </source>
</evidence>
<reference key="1">
    <citation type="journal article" date="1998" name="Nature">
        <title>The complete genome of the hyperthermophilic bacterium Aquifex aeolicus.</title>
        <authorList>
            <person name="Deckert G."/>
            <person name="Warren P.V."/>
            <person name="Gaasterland T."/>
            <person name="Young W.G."/>
            <person name="Lenox A.L."/>
            <person name="Graham D.E."/>
            <person name="Overbeek R."/>
            <person name="Snead M.A."/>
            <person name="Keller M."/>
            <person name="Aujay M."/>
            <person name="Huber R."/>
            <person name="Feldman R.A."/>
            <person name="Short J.M."/>
            <person name="Olsen G.J."/>
            <person name="Swanson R.V."/>
        </authorList>
    </citation>
    <scope>NUCLEOTIDE SEQUENCE [LARGE SCALE GENOMIC DNA]</scope>
    <source>
        <strain>VF5</strain>
    </source>
</reference>
<accession>O66935</accession>
<proteinExistence type="inferred from homology"/>
<name>GLGA_AQUAE</name>
<sequence length="463" mass="53457">MRVLFCSSEIYPYAKTGGLADFSFCLIKYLKKYGVKVKGVMPYYKTLKAENLRKTDKGVTLNLNGKDYTFEVYESEDCYFLRNDELFGRDYIYGPPGWGYEDNDIRFGGFSRAVSELISTGQLEADVVHANDWQTALIPLFLKEVFKTPVKTVFTIHNLAYQGLFPKETVERVGIPPYLFHMEAVEFWGLVNFMKGGIVFSDLITTVSPTYAKEIQTQEYGYGLEGVLKKYSYKLRGILNGIDYEVWNPEKDKYIYQNYSLRNYSKKFKNKEFLSKELGIEAEKPLISFINRFTHQKGVELILNCAEEMSKLNANFVFLGTGEYENAFLDVSKIYKNFKVFAEFNEGFARKLYASSDFILMPSYFEPCGLTQMIGMRYGCVPIVRKTGGLRDTVKDISEGGYGITFEEPSKETFLCSLKRAIELYENAKKFRNSVKIVMSLDFSCDRMTKEYIECYEEVQSHQ</sequence>
<comment type="function">
    <text evidence="1">Synthesizes alpha-1,4-glucan chains using ADP-glucose.</text>
</comment>
<comment type="catalytic activity">
    <reaction evidence="1">
        <text>[(1-&gt;4)-alpha-D-glucosyl](n) + ADP-alpha-D-glucose = [(1-&gt;4)-alpha-D-glucosyl](n+1) + ADP + H(+)</text>
        <dbReference type="Rhea" id="RHEA:18189"/>
        <dbReference type="Rhea" id="RHEA-COMP:9584"/>
        <dbReference type="Rhea" id="RHEA-COMP:9587"/>
        <dbReference type="ChEBI" id="CHEBI:15378"/>
        <dbReference type="ChEBI" id="CHEBI:15444"/>
        <dbReference type="ChEBI" id="CHEBI:57498"/>
        <dbReference type="ChEBI" id="CHEBI:456216"/>
        <dbReference type="EC" id="2.4.1.21"/>
    </reaction>
</comment>
<comment type="pathway">
    <text evidence="1">Glycan biosynthesis; glycogen biosynthesis.</text>
</comment>
<comment type="similarity">
    <text evidence="1">Belongs to the glycosyltransferase 1 family. Bacterial/plant glycogen synthase subfamily.</text>
</comment>
<gene>
    <name evidence="1" type="primary">glgA</name>
    <name type="ordered locus">aq_721</name>
</gene>
<organism>
    <name type="scientific">Aquifex aeolicus (strain VF5)</name>
    <dbReference type="NCBI Taxonomy" id="224324"/>
    <lineage>
        <taxon>Bacteria</taxon>
        <taxon>Pseudomonadati</taxon>
        <taxon>Aquificota</taxon>
        <taxon>Aquificia</taxon>
        <taxon>Aquificales</taxon>
        <taxon>Aquificaceae</taxon>
        <taxon>Aquifex</taxon>
    </lineage>
</organism>
<keyword id="KW-0320">Glycogen biosynthesis</keyword>
<keyword id="KW-0328">Glycosyltransferase</keyword>
<keyword id="KW-1185">Reference proteome</keyword>
<keyword id="KW-0808">Transferase</keyword>
<dbReference type="EC" id="2.4.1.21" evidence="1"/>
<dbReference type="EMBL" id="AE000657">
    <property type="protein sequence ID" value="AAC06894.1"/>
    <property type="molecule type" value="Genomic_DNA"/>
</dbReference>
<dbReference type="PIR" id="C70363">
    <property type="entry name" value="C70363"/>
</dbReference>
<dbReference type="RefSeq" id="NP_213495.1">
    <property type="nucleotide sequence ID" value="NC_000918.1"/>
</dbReference>
<dbReference type="RefSeq" id="WP_010880433.1">
    <property type="nucleotide sequence ID" value="NC_000918.1"/>
</dbReference>
<dbReference type="SMR" id="O66935"/>
<dbReference type="FunCoup" id="O66935">
    <property type="interactions" value="240"/>
</dbReference>
<dbReference type="STRING" id="224324.aq_721"/>
<dbReference type="CAZy" id="GT5">
    <property type="family name" value="Glycosyltransferase Family 5"/>
</dbReference>
<dbReference type="EnsemblBacteria" id="AAC06894">
    <property type="protein sequence ID" value="AAC06894"/>
    <property type="gene ID" value="aq_721"/>
</dbReference>
<dbReference type="KEGG" id="aae:aq_721"/>
<dbReference type="PATRIC" id="fig|224324.8.peg.578"/>
<dbReference type="eggNOG" id="COG0297">
    <property type="taxonomic scope" value="Bacteria"/>
</dbReference>
<dbReference type="HOGENOM" id="CLU_009583_18_5_0"/>
<dbReference type="InParanoid" id="O66935"/>
<dbReference type="OrthoDB" id="9808590at2"/>
<dbReference type="UniPathway" id="UPA00164"/>
<dbReference type="Proteomes" id="UP000000798">
    <property type="component" value="Chromosome"/>
</dbReference>
<dbReference type="GO" id="GO:0009011">
    <property type="term" value="F:alpha-1,4-glucan glucosyltransferase (ADP-glucose donor) activity"/>
    <property type="evidence" value="ECO:0007669"/>
    <property type="project" value="UniProtKB-UniRule"/>
</dbReference>
<dbReference type="GO" id="GO:0004373">
    <property type="term" value="F:alpha-1,4-glucan glucosyltransferase (UDP-glucose donor) activity"/>
    <property type="evidence" value="ECO:0007669"/>
    <property type="project" value="InterPro"/>
</dbReference>
<dbReference type="GO" id="GO:0005978">
    <property type="term" value="P:glycogen biosynthetic process"/>
    <property type="evidence" value="ECO:0007669"/>
    <property type="project" value="UniProtKB-UniRule"/>
</dbReference>
<dbReference type="CDD" id="cd03791">
    <property type="entry name" value="GT5_Glycogen_synthase_DULL1-like"/>
    <property type="match status" value="1"/>
</dbReference>
<dbReference type="Gene3D" id="3.40.50.2000">
    <property type="entry name" value="Glycogen Phosphorylase B"/>
    <property type="match status" value="2"/>
</dbReference>
<dbReference type="HAMAP" id="MF_00484">
    <property type="entry name" value="Glycogen_synth"/>
    <property type="match status" value="1"/>
</dbReference>
<dbReference type="InterPro" id="IPR001296">
    <property type="entry name" value="Glyco_trans_1"/>
</dbReference>
<dbReference type="InterPro" id="IPR011835">
    <property type="entry name" value="GS/SS"/>
</dbReference>
<dbReference type="InterPro" id="IPR013534">
    <property type="entry name" value="Starch_synth_cat_dom"/>
</dbReference>
<dbReference type="NCBIfam" id="TIGR02095">
    <property type="entry name" value="glgA"/>
    <property type="match status" value="1"/>
</dbReference>
<dbReference type="PANTHER" id="PTHR45825:SF11">
    <property type="entry name" value="ALPHA AMYLASE DOMAIN-CONTAINING PROTEIN"/>
    <property type="match status" value="1"/>
</dbReference>
<dbReference type="PANTHER" id="PTHR45825">
    <property type="entry name" value="GRANULE-BOUND STARCH SYNTHASE 1, CHLOROPLASTIC/AMYLOPLASTIC"/>
    <property type="match status" value="1"/>
</dbReference>
<dbReference type="Pfam" id="PF08323">
    <property type="entry name" value="Glyco_transf_5"/>
    <property type="match status" value="1"/>
</dbReference>
<dbReference type="Pfam" id="PF00534">
    <property type="entry name" value="Glycos_transf_1"/>
    <property type="match status" value="1"/>
</dbReference>
<dbReference type="SUPFAM" id="SSF53756">
    <property type="entry name" value="UDP-Glycosyltransferase/glycogen phosphorylase"/>
    <property type="match status" value="1"/>
</dbReference>
<protein>
    <recommendedName>
        <fullName evidence="1">Glycogen synthase</fullName>
        <ecNumber evidence="1">2.4.1.21</ecNumber>
    </recommendedName>
    <alternativeName>
        <fullName evidence="1">Starch [bacterial glycogen] synthase</fullName>
    </alternativeName>
</protein>